<accession>O08589</accession>
<keyword id="KW-1003">Cell membrane</keyword>
<keyword id="KW-0903">Direct protein sequencing</keyword>
<keyword id="KW-0318">Glutathionylation</keyword>
<keyword id="KW-0406">Ion transport</keyword>
<keyword id="KW-0449">Lipoprotein</keyword>
<keyword id="KW-0472">Membrane</keyword>
<keyword id="KW-0564">Palmitate</keyword>
<keyword id="KW-0597">Phosphoprotein</keyword>
<keyword id="KW-0630">Potassium</keyword>
<keyword id="KW-0633">Potassium transport</keyword>
<keyword id="KW-1185">Reference proteome</keyword>
<keyword id="KW-0732">Signal</keyword>
<keyword id="KW-0915">Sodium</keyword>
<keyword id="KW-0739">Sodium transport</keyword>
<keyword id="KW-0740">Sodium/potassium transport</keyword>
<keyword id="KW-0812">Transmembrane</keyword>
<keyword id="KW-1133">Transmembrane helix</keyword>
<keyword id="KW-0813">Transport</keyword>
<protein>
    <recommendedName>
        <fullName evidence="2">Phospholemman</fullName>
    </recommendedName>
    <alternativeName>
        <fullName evidence="14">FXYD domain-containing ion transport regulator 1</fullName>
    </alternativeName>
    <alternativeName>
        <fullName evidence="13">Sodium/potassium-transporting ATPase subunit FXYD1</fullName>
    </alternativeName>
</protein>
<evidence type="ECO:0000250" key="1">
    <source>
        <dbReference type="UniProtKB" id="O00168"/>
    </source>
</evidence>
<evidence type="ECO:0000250" key="2">
    <source>
        <dbReference type="UniProtKB" id="P56513"/>
    </source>
</evidence>
<evidence type="ECO:0000250" key="3">
    <source>
        <dbReference type="UniProtKB" id="Q3SZX0"/>
    </source>
</evidence>
<evidence type="ECO:0000250" key="4">
    <source>
        <dbReference type="UniProtKB" id="Q9Z239"/>
    </source>
</evidence>
<evidence type="ECO:0000255" key="5"/>
<evidence type="ECO:0000256" key="6">
    <source>
        <dbReference type="SAM" id="MobiDB-lite"/>
    </source>
</evidence>
<evidence type="ECO:0000269" key="7">
    <source>
    </source>
</evidence>
<evidence type="ECO:0000269" key="8">
    <source>
    </source>
</evidence>
<evidence type="ECO:0000269" key="9">
    <source>
    </source>
</evidence>
<evidence type="ECO:0000269" key="10">
    <source>
    </source>
</evidence>
<evidence type="ECO:0000269" key="11">
    <source>
    </source>
</evidence>
<evidence type="ECO:0000303" key="12">
    <source>
    </source>
</evidence>
<evidence type="ECO:0000305" key="13"/>
<evidence type="ECO:0000312" key="14">
    <source>
        <dbReference type="RGD" id="69306"/>
    </source>
</evidence>
<comment type="function">
    <text evidence="2 4 8">Associates with and regulates the activity of the sodium/potassium-transporting ATPase (NKA) which transports Na(+) out of the cell and K(+) into the cell (By similarity). Inhibits NKA activity in its unphosphorylated state and stimulates activity when phosphorylated (PubMed:17283221). Reduces glutathionylation of the NKA beta-1 subunit ATP1B1, thus reversing glutathionylation-mediated inhibition of ATP1B1 (By similarity). Contributes to female sexual development by maintaining the excitability of neurons which secrete gonadotropin-releasing hormone (By similarity).</text>
</comment>
<comment type="subunit">
    <text evidence="1 2 3 4 8 10 11">Homotetramer (By similarity). Monomer (By similarity). Regulatory subunit of the sodium/potassium-transporting ATPase (NKA) which is composed of a catalytic alpha subunit, a non-catalytic beta subunit and an additional regulatory subunit (By similarity). The monomeric form associates with NKA while the oligomeric form does not (By similarity). Interacts with the catalytic alpha-1 subunit ATP1A1 (PubMed:17283221, PubMed:19339511, PubMed:23532852). Also interacts with the catalytic alpha-2 and alpha-3 subunits ATP1A2 and ATP1A3 (PubMed:23532852). Very little interaction with ATP1A1, ATP1A2 or ATP1A3 when phosphorylated at Ser-83 (PubMed:23532852). Interacts with the non-catalytic beta-1 subunit ATP1B1 (PubMed:23532852). Oxidative stress decreases interaction with ATP1A1 but increases interaction with ATP1B1 (By similarity).</text>
</comment>
<comment type="subcellular location">
    <subcellularLocation>
        <location evidence="11">Cell membrane</location>
        <location evidence="11">Sarcolemma</location>
        <topology evidence="5">Single-pass type I membrane protein</topology>
    </subcellularLocation>
    <subcellularLocation>
        <location evidence="7">Apical cell membrane</location>
        <topology evidence="5">Single-pass type I membrane protein</topology>
    </subcellularLocation>
    <subcellularLocation>
        <location evidence="11">Membrane</location>
        <location evidence="11">Caveola</location>
    </subcellularLocation>
    <subcellularLocation>
        <location evidence="11">Cell membrane</location>
        <location evidence="11">Sarcolemma</location>
        <location evidence="11">T-tubule</location>
    </subcellularLocation>
    <text evidence="7 11">Detected in the apical cell membrane in brain (PubMed:12657675). In myocytes, localizes to sarcolemma, t-tubules and intercalated disks (PubMed:23532852).</text>
</comment>
<comment type="tissue specificity">
    <text evidence="7 9">In adult brain, highest levels are found in the cerebellum and in the lateral, third and fourth ventricles of the choroid plexus (at protein level) (PubMed:12657675). Also detected in cells of a portion of the ependymal lining of the lateral ventricle on its rostral surface posterior to the caudate putamen (at protein level) (PubMed:12657675). Expressed in a subset of neurons which secrete gonadotropin-releasing hormone (PubMed:19187398).</text>
</comment>
<comment type="developmental stage">
    <text evidence="9">In the medial basal hypothalamus, levels are low at birth and increase during neonatal and infantile development to reach a maximum during the mid-to-late juvenile period at postnatal days 24-30.</text>
</comment>
<comment type="domain">
    <text evidence="8">The cytoplasmic domain is sufficient to regulate sodium/potassium-transporting ATPase activity.</text>
</comment>
<comment type="PTM">
    <text evidence="1 2 8 11">Major plasma membrane substrate for cAMP-dependent protein kinase (PKA) and protein kinase C (PKC) in several different tissues (By similarity). Phosphorylated in response to insulin and adrenergic stimulation (By similarity). Phosphorylation at Ser-88 stimulates sodium/potassium-transporting ATPase activity while the unphosphorylated form inhibits sodium/potassium-transporting ATPase activity (PubMed:17283221). Phosphorylation increases tetramerization, decreases binding to ATP1A1 and reduces inhibition of ATP1A1 activity (By similarity). Phosphorylation at Ser-83 leads to greatly reduced interaction with ATP1A1, ATP1A2 and ATP1A3 (PubMed:23532852). May be phosphorylated by DMPK (By similarity).</text>
</comment>
<comment type="PTM">
    <text evidence="1">Palmitoylation increases half-life and stability and is enhanced upon phosphorylation at Ser-88 by PKA.</text>
</comment>
<comment type="similarity">
    <text evidence="13">Belongs to the FXYD family.</text>
</comment>
<reference key="1">
    <citation type="journal article" date="1997" name="Genomics">
        <title>Characterization of the human and rat phospholemman (PLM) cDNAs and localization of the human PLM gene to chromosome 19q13.1.</title>
        <authorList>
            <person name="Chen L.-S.K."/>
            <person name="Lo C.F."/>
            <person name="Numann R."/>
            <person name="Cuddy M."/>
        </authorList>
    </citation>
    <scope>NUCLEOTIDE SEQUENCE [MRNA]</scope>
    <source>
        <tissue>Heart</tissue>
    </source>
</reference>
<reference key="2">
    <citation type="journal article" date="2000" name="Genomics">
        <title>The FXYD gene family of small ion transport regulators or channels: cDNA sequence, protein signature sequence, and expression.</title>
        <authorList>
            <person name="Sweadner K.J."/>
            <person name="Rael E."/>
        </authorList>
    </citation>
    <scope>NUCLEOTIDE SEQUENCE [MRNA]</scope>
</reference>
<reference key="3">
    <citation type="submission" date="2007-09" db="UniProtKB">
        <authorList>
            <person name="Lubec G."/>
            <person name="Kang S.U."/>
            <person name="Lubec S."/>
        </authorList>
    </citation>
    <scope>PROTEIN SEQUENCE OF 70-81</scope>
    <scope>IDENTIFICATION BY MASS SPECTROMETRY</scope>
    <source>
        <strain>Sprague-Dawley</strain>
        <tissue>Brain</tissue>
    </source>
</reference>
<reference key="4">
    <citation type="journal article" date="2003" name="J. Neurosci.">
        <title>Phospholemman, a single-span membrane protein, is an accessory protein of Na,K-ATPase in cerebellum and choroid plexus.</title>
        <authorList>
            <person name="Feschenko M.S."/>
            <person name="Donnet C."/>
            <person name="Wetzel R.K."/>
            <person name="Asinovski N.K."/>
            <person name="Jones L.R."/>
            <person name="Sweadner K.J."/>
        </authorList>
    </citation>
    <scope>SUBCELLULAR LOCATION</scope>
    <scope>TISSUE SPECIFICITY</scope>
</reference>
<reference key="5">
    <citation type="journal article" date="2007" name="FASEB J.">
        <title>The intracellular region of FXYD1 is sufficient to regulate cardiac Na/K ATPase.</title>
        <authorList>
            <person name="Pavlovic D."/>
            <person name="Fuller W."/>
            <person name="Shattock M.J."/>
        </authorList>
    </citation>
    <scope>FUNCTION</scope>
    <scope>INTERACTION WITH ATP1A1</scope>
    <scope>DOMAIN</scope>
    <scope>ROLE OF PHOSPHORYLATION AT SER-88</scope>
</reference>
<reference key="6">
    <citation type="journal article" date="2009" name="Am. J. Physiol.">
        <title>FXYD1 phosphorylation in vitro and in adult rat cardiac myocytes: threonine 69 is a novel substrate for protein kinase C.</title>
        <authorList>
            <person name="Fuller W."/>
            <person name="Howie J."/>
            <person name="McLatchie L.M."/>
            <person name="Weber R.J."/>
            <person name="Hastie C.J."/>
            <person name="Burness K."/>
            <person name="Pavlovic D."/>
            <person name="Shattock M.J."/>
        </authorList>
    </citation>
    <scope>INTERACTION WITH ATP1A1</scope>
    <scope>PHOSPHORYLATION AT SER-83; SER-88 AND THR-89</scope>
</reference>
<reference key="7">
    <citation type="journal article" date="2009" name="J. Neuroendocrinol.">
        <title>FXYD1, a modulator of Na,K-ATPase activity, facilitates female sexual development by maintaining gonadotrophin-releasing hormone neuronal excitability.</title>
        <authorList>
            <person name="Garcia-Rudaz C."/>
            <person name="Deng V."/>
            <person name="Matagne V."/>
            <person name="Ronnekleiv O.K."/>
            <person name="Bosch M."/>
            <person name="Han V."/>
            <person name="Percy A.K."/>
            <person name="Ojeda S.R."/>
        </authorList>
    </citation>
    <scope>TISSUE SPECIFICITY</scope>
    <scope>DEVELOPMENTAL STAGE</scope>
</reference>
<reference key="8">
    <citation type="journal article" date="2013" name="J. Biol. Chem.">
        <title>A separate pool of cardiac phospholemman that does not regulate or associate with the sodium pump: multimers of phospholemman in ventricular muscle.</title>
        <authorList>
            <person name="Wypijewski K.J."/>
            <person name="Howie J."/>
            <person name="Reilly L."/>
            <person name="Tulloch L.B."/>
            <person name="Aughton K.L."/>
            <person name="McLatchie L.M."/>
            <person name="Shattock M.J."/>
            <person name="Calaghan S.C."/>
            <person name="Fuller W."/>
        </authorList>
    </citation>
    <scope>INTERACTION WITH ATP1A1; ATP1A2; ATP1A3 AND ATP1B1</scope>
    <scope>SUBCELLULAR LOCATION</scope>
    <scope>PHOSPHORYLATION AT SER-83 AND SER-88</scope>
</reference>
<gene>
    <name evidence="14" type="primary">Fxyd1</name>
    <name evidence="12" type="synonym">Plm</name>
</gene>
<sequence length="92" mass="10365">MASPGHILIVCVCLLSMASAEAPQEPDPFTYDYHTLRIGGLTIAGILFILGILIILSKRCRCKFNQQQRTGEPDEEEGTFRSSIRRLSTRRR</sequence>
<dbReference type="EMBL" id="U72246">
    <property type="protein sequence ID" value="AAC53169.1"/>
    <property type="molecule type" value="mRNA"/>
</dbReference>
<dbReference type="RefSeq" id="XP_006228901.1">
    <property type="nucleotide sequence ID" value="XM_006228839.5"/>
</dbReference>
<dbReference type="RefSeq" id="XP_008757406.1">
    <property type="nucleotide sequence ID" value="XM_008759184.2"/>
</dbReference>
<dbReference type="RefSeq" id="XP_017445120.1">
    <property type="nucleotide sequence ID" value="XM_017589631.3"/>
</dbReference>
<dbReference type="RefSeq" id="XP_063128252.1">
    <property type="nucleotide sequence ID" value="XM_063272182.1"/>
</dbReference>
<dbReference type="RefSeq" id="XP_063128255.1">
    <property type="nucleotide sequence ID" value="XM_063272185.1"/>
</dbReference>
<dbReference type="SMR" id="O08589"/>
<dbReference type="CORUM" id="O08589"/>
<dbReference type="FunCoup" id="O08589">
    <property type="interactions" value="72"/>
</dbReference>
<dbReference type="IntAct" id="O08589">
    <property type="interactions" value="2"/>
</dbReference>
<dbReference type="STRING" id="10116.ENSRNOP00000028624"/>
<dbReference type="iPTMnet" id="O08589"/>
<dbReference type="PhosphoSitePlus" id="O08589"/>
<dbReference type="SwissPalm" id="O08589"/>
<dbReference type="PaxDb" id="10116-ENSRNOP00000028624"/>
<dbReference type="GeneID" id="58971"/>
<dbReference type="UCSC" id="RGD:69306">
    <property type="organism name" value="rat"/>
</dbReference>
<dbReference type="AGR" id="RGD:69306"/>
<dbReference type="CTD" id="5348"/>
<dbReference type="RGD" id="69306">
    <property type="gene designation" value="Fxyd1"/>
</dbReference>
<dbReference type="eggNOG" id="ENOG502S5XM">
    <property type="taxonomic scope" value="Eukaryota"/>
</dbReference>
<dbReference type="HOGENOM" id="CLU_171208_2_0_1"/>
<dbReference type="InParanoid" id="O08589"/>
<dbReference type="OrthoDB" id="8430468at2759"/>
<dbReference type="PhylomeDB" id="O08589"/>
<dbReference type="TreeFam" id="TF333443"/>
<dbReference type="Reactome" id="R-RNO-5578775">
    <property type="pathway name" value="Ion homeostasis"/>
</dbReference>
<dbReference type="Reactome" id="R-RNO-936837">
    <property type="pathway name" value="Ion transport by P-type ATPases"/>
</dbReference>
<dbReference type="PRO" id="PR:O08589"/>
<dbReference type="Proteomes" id="UP000002494">
    <property type="component" value="Unplaced"/>
</dbReference>
<dbReference type="GO" id="GO:0016324">
    <property type="term" value="C:apical plasma membrane"/>
    <property type="evidence" value="ECO:0000314"/>
    <property type="project" value="UniProtKB"/>
</dbReference>
<dbReference type="GO" id="GO:0005901">
    <property type="term" value="C:caveola"/>
    <property type="evidence" value="ECO:0000314"/>
    <property type="project" value="RGD"/>
</dbReference>
<dbReference type="GO" id="GO:0014704">
    <property type="term" value="C:intercalated disc"/>
    <property type="evidence" value="ECO:0000314"/>
    <property type="project" value="UniProtKB"/>
</dbReference>
<dbReference type="GO" id="GO:0042383">
    <property type="term" value="C:sarcolemma"/>
    <property type="evidence" value="ECO:0000314"/>
    <property type="project" value="RGD"/>
</dbReference>
<dbReference type="GO" id="GO:0005890">
    <property type="term" value="C:sodium:potassium-exchanging ATPase complex"/>
    <property type="evidence" value="ECO:0000250"/>
    <property type="project" value="UniProtKB"/>
</dbReference>
<dbReference type="GO" id="GO:0030315">
    <property type="term" value="C:T-tubule"/>
    <property type="evidence" value="ECO:0000314"/>
    <property type="project" value="UniProtKB"/>
</dbReference>
<dbReference type="GO" id="GO:0051117">
    <property type="term" value="F:ATPase binding"/>
    <property type="evidence" value="ECO:0000314"/>
    <property type="project" value="RGD"/>
</dbReference>
<dbReference type="GO" id="GO:0017022">
    <property type="term" value="F:myosin binding"/>
    <property type="evidence" value="ECO:0000314"/>
    <property type="project" value="RGD"/>
</dbReference>
<dbReference type="GO" id="GO:0017080">
    <property type="term" value="F:sodium channel regulator activity"/>
    <property type="evidence" value="ECO:0000266"/>
    <property type="project" value="RGD"/>
</dbReference>
<dbReference type="GO" id="GO:0010734">
    <property type="term" value="P:negative regulation of protein glutathionylation"/>
    <property type="evidence" value="ECO:0000250"/>
    <property type="project" value="UniProtKB"/>
</dbReference>
<dbReference type="GO" id="GO:1903797">
    <property type="term" value="P:positive regulation of inorganic anion transmembrane transport"/>
    <property type="evidence" value="ECO:0000315"/>
    <property type="project" value="RGD"/>
</dbReference>
<dbReference type="GO" id="GO:0032892">
    <property type="term" value="P:positive regulation of organic acid transport"/>
    <property type="evidence" value="ECO:0000315"/>
    <property type="project" value="RGD"/>
</dbReference>
<dbReference type="GO" id="GO:1903278">
    <property type="term" value="P:positive regulation of sodium ion export across plasma membrane"/>
    <property type="evidence" value="ECO:0000250"/>
    <property type="project" value="UniProtKB"/>
</dbReference>
<dbReference type="GO" id="GO:0006813">
    <property type="term" value="P:potassium ion transport"/>
    <property type="evidence" value="ECO:0007669"/>
    <property type="project" value="UniProtKB-KW"/>
</dbReference>
<dbReference type="GO" id="GO:0086004">
    <property type="term" value="P:regulation of cardiac muscle cell contraction"/>
    <property type="evidence" value="ECO:0000315"/>
    <property type="project" value="RGD"/>
</dbReference>
<dbReference type="GO" id="GO:0086036">
    <property type="term" value="P:regulation of cardiac muscle cell membrane potential"/>
    <property type="evidence" value="ECO:0000266"/>
    <property type="project" value="RGD"/>
</dbReference>
<dbReference type="GO" id="GO:0051480">
    <property type="term" value="P:regulation of cytosolic calcium ion concentration"/>
    <property type="evidence" value="ECO:0000315"/>
    <property type="project" value="RGD"/>
</dbReference>
<dbReference type="GO" id="GO:0006814">
    <property type="term" value="P:sodium ion transport"/>
    <property type="evidence" value="ECO:0007669"/>
    <property type="project" value="UniProtKB-KW"/>
</dbReference>
<dbReference type="CDD" id="cd20317">
    <property type="entry name" value="FXYD1"/>
    <property type="match status" value="1"/>
</dbReference>
<dbReference type="FunFam" id="1.20.5.780:FF:000002">
    <property type="entry name" value="FXYD domain-containing ion transport regulator"/>
    <property type="match status" value="1"/>
</dbReference>
<dbReference type="Gene3D" id="1.20.5.780">
    <property type="entry name" value="Single helix bin"/>
    <property type="match status" value="1"/>
</dbReference>
<dbReference type="InterPro" id="IPR047297">
    <property type="entry name" value="FXYD_motif"/>
</dbReference>
<dbReference type="InterPro" id="IPR000272">
    <property type="entry name" value="Ion-transport_regulator_FXYD"/>
</dbReference>
<dbReference type="InterPro" id="IPR047281">
    <property type="entry name" value="PLM"/>
</dbReference>
<dbReference type="PANTHER" id="PTHR14132:SF12">
    <property type="entry name" value="PHOSPHOLEMMAN"/>
    <property type="match status" value="1"/>
</dbReference>
<dbReference type="PANTHER" id="PTHR14132">
    <property type="entry name" value="SODIUM/POTASSIUM-TRANSPORTING ATPASE SUBUNIT GAMMA"/>
    <property type="match status" value="1"/>
</dbReference>
<dbReference type="Pfam" id="PF02038">
    <property type="entry name" value="ATP1G1_PLM_MAT8"/>
    <property type="match status" value="1"/>
</dbReference>
<dbReference type="PROSITE" id="PS01310">
    <property type="entry name" value="FXYD"/>
    <property type="match status" value="1"/>
</dbReference>
<organism>
    <name type="scientific">Rattus norvegicus</name>
    <name type="common">Rat</name>
    <dbReference type="NCBI Taxonomy" id="10116"/>
    <lineage>
        <taxon>Eukaryota</taxon>
        <taxon>Metazoa</taxon>
        <taxon>Chordata</taxon>
        <taxon>Craniata</taxon>
        <taxon>Vertebrata</taxon>
        <taxon>Euteleostomi</taxon>
        <taxon>Mammalia</taxon>
        <taxon>Eutheria</taxon>
        <taxon>Euarchontoglires</taxon>
        <taxon>Glires</taxon>
        <taxon>Rodentia</taxon>
        <taxon>Myomorpha</taxon>
        <taxon>Muroidea</taxon>
        <taxon>Muridae</taxon>
        <taxon>Murinae</taxon>
        <taxon>Rattus</taxon>
    </lineage>
</organism>
<feature type="signal peptide" evidence="2">
    <location>
        <begin position="1"/>
        <end position="20"/>
    </location>
</feature>
<feature type="chain" id="PRO_0000010361" description="Phospholemman">
    <location>
        <begin position="21"/>
        <end position="92"/>
    </location>
</feature>
<feature type="topological domain" description="Extracellular" evidence="5">
    <location>
        <begin position="21"/>
        <end position="35"/>
    </location>
</feature>
<feature type="transmembrane region" description="Helical" evidence="5">
    <location>
        <begin position="36"/>
        <end position="56"/>
    </location>
</feature>
<feature type="topological domain" description="Cytoplasmic" evidence="5">
    <location>
        <begin position="57"/>
        <end position="92"/>
    </location>
</feature>
<feature type="region of interest" description="Disordered" evidence="6">
    <location>
        <begin position="66"/>
        <end position="92"/>
    </location>
</feature>
<feature type="compositionally biased region" description="Basic residues" evidence="6">
    <location>
        <begin position="83"/>
        <end position="92"/>
    </location>
</feature>
<feature type="modified residue" description="S-glutathionyl cysteine; alternate" evidence="2">
    <location>
        <position position="62"/>
    </location>
</feature>
<feature type="modified residue" description="Phosphothreonine" evidence="4">
    <location>
        <position position="79"/>
    </location>
</feature>
<feature type="modified residue" description="Phosphoserine" evidence="4">
    <location>
        <position position="82"/>
    </location>
</feature>
<feature type="modified residue" description="Phosphoserine; by PKA and PKC" evidence="10 11">
    <location>
        <position position="83"/>
    </location>
</feature>
<feature type="modified residue" description="Phosphoserine; by PKA" evidence="10 11">
    <location>
        <position position="88"/>
    </location>
</feature>
<feature type="modified residue" description="Phosphothreonine; by PKC" evidence="10">
    <location>
        <position position="89"/>
    </location>
</feature>
<feature type="lipid moiety-binding region" description="S-palmitoyl cysteine" evidence="1">
    <location>
        <position position="60"/>
    </location>
</feature>
<feature type="lipid moiety-binding region" description="S-palmitoyl cysteine; alternate" evidence="1">
    <location>
        <position position="62"/>
    </location>
</feature>
<feature type="sequence conflict" description="In Ref. 1; AAC53169." evidence="13" ref="1">
    <original>SPG</original>
    <variation>PLH</variation>
    <location>
        <begin position="3"/>
        <end position="5"/>
    </location>
</feature>
<feature type="sequence conflict" description="In Ref. 1; AAC53169." evidence="13" ref="1">
    <original>IAGI</original>
    <variation>AGIL</variation>
    <location>
        <begin position="43"/>
        <end position="46"/>
    </location>
</feature>
<proteinExistence type="evidence at protein level"/>
<name>PLM_RAT</name>